<feature type="chain" id="PRO_0000323089" description="Small ribosomal subunit protein uS5">
    <location>
        <begin position="1"/>
        <end position="172"/>
    </location>
</feature>
<feature type="domain" description="S5 DRBM" evidence="1">
    <location>
        <begin position="17"/>
        <end position="80"/>
    </location>
</feature>
<keyword id="KW-0687">Ribonucleoprotein</keyword>
<keyword id="KW-0689">Ribosomal protein</keyword>
<keyword id="KW-0694">RNA-binding</keyword>
<keyword id="KW-0699">rRNA-binding</keyword>
<proteinExistence type="inferred from homology"/>
<gene>
    <name evidence="1" type="primary">rpsE</name>
    <name type="ordered locus">BMASAVP1_A3152</name>
</gene>
<protein>
    <recommendedName>
        <fullName evidence="1">Small ribosomal subunit protein uS5</fullName>
    </recommendedName>
    <alternativeName>
        <fullName evidence="2">30S ribosomal protein S5</fullName>
    </alternativeName>
</protein>
<comment type="function">
    <text evidence="1">With S4 and S12 plays an important role in translational accuracy.</text>
</comment>
<comment type="function">
    <text evidence="1">Located at the back of the 30S subunit body where it stabilizes the conformation of the head with respect to the body.</text>
</comment>
<comment type="subunit">
    <text evidence="1">Part of the 30S ribosomal subunit. Contacts proteins S4 and S8.</text>
</comment>
<comment type="domain">
    <text>The N-terminal domain interacts with the head of the 30S subunit; the C-terminal domain interacts with the body and contacts protein S4. The interaction surface between S4 and S5 is involved in control of translational fidelity.</text>
</comment>
<comment type="similarity">
    <text evidence="1">Belongs to the universal ribosomal protein uS5 family.</text>
</comment>
<reference key="1">
    <citation type="journal article" date="2010" name="Genome Biol. Evol.">
        <title>Continuing evolution of Burkholderia mallei through genome reduction and large-scale rearrangements.</title>
        <authorList>
            <person name="Losada L."/>
            <person name="Ronning C.M."/>
            <person name="DeShazer D."/>
            <person name="Woods D."/>
            <person name="Fedorova N."/>
            <person name="Kim H.S."/>
            <person name="Shabalina S.A."/>
            <person name="Pearson T.R."/>
            <person name="Brinkac L."/>
            <person name="Tan P."/>
            <person name="Nandi T."/>
            <person name="Crabtree J."/>
            <person name="Badger J."/>
            <person name="Beckstrom-Sternberg S."/>
            <person name="Saqib M."/>
            <person name="Schutzer S.E."/>
            <person name="Keim P."/>
            <person name="Nierman W.C."/>
        </authorList>
    </citation>
    <scope>NUCLEOTIDE SEQUENCE [LARGE SCALE GENOMIC DNA]</scope>
    <source>
        <strain>SAVP1</strain>
    </source>
</reference>
<accession>A1V886</accession>
<dbReference type="EMBL" id="CP000526">
    <property type="protein sequence ID" value="ABM51403.1"/>
    <property type="molecule type" value="Genomic_DNA"/>
</dbReference>
<dbReference type="RefSeq" id="WP_004197945.1">
    <property type="nucleotide sequence ID" value="NC_008785.1"/>
</dbReference>
<dbReference type="SMR" id="A1V886"/>
<dbReference type="GeneID" id="93126536"/>
<dbReference type="KEGG" id="bmv:BMASAVP1_A3152"/>
<dbReference type="HOGENOM" id="CLU_065898_2_2_4"/>
<dbReference type="GO" id="GO:0015935">
    <property type="term" value="C:small ribosomal subunit"/>
    <property type="evidence" value="ECO:0007669"/>
    <property type="project" value="InterPro"/>
</dbReference>
<dbReference type="GO" id="GO:0019843">
    <property type="term" value="F:rRNA binding"/>
    <property type="evidence" value="ECO:0007669"/>
    <property type="project" value="UniProtKB-UniRule"/>
</dbReference>
<dbReference type="GO" id="GO:0003735">
    <property type="term" value="F:structural constituent of ribosome"/>
    <property type="evidence" value="ECO:0007669"/>
    <property type="project" value="InterPro"/>
</dbReference>
<dbReference type="GO" id="GO:0006412">
    <property type="term" value="P:translation"/>
    <property type="evidence" value="ECO:0007669"/>
    <property type="project" value="UniProtKB-UniRule"/>
</dbReference>
<dbReference type="FunFam" id="3.30.160.20:FF:000001">
    <property type="entry name" value="30S ribosomal protein S5"/>
    <property type="match status" value="1"/>
</dbReference>
<dbReference type="FunFam" id="3.30.230.10:FF:000002">
    <property type="entry name" value="30S ribosomal protein S5"/>
    <property type="match status" value="1"/>
</dbReference>
<dbReference type="Gene3D" id="3.30.160.20">
    <property type="match status" value="1"/>
</dbReference>
<dbReference type="Gene3D" id="3.30.230.10">
    <property type="match status" value="1"/>
</dbReference>
<dbReference type="HAMAP" id="MF_01307_B">
    <property type="entry name" value="Ribosomal_uS5_B"/>
    <property type="match status" value="1"/>
</dbReference>
<dbReference type="InterPro" id="IPR020568">
    <property type="entry name" value="Ribosomal_Su5_D2-typ_SF"/>
</dbReference>
<dbReference type="InterPro" id="IPR000851">
    <property type="entry name" value="Ribosomal_uS5"/>
</dbReference>
<dbReference type="InterPro" id="IPR005712">
    <property type="entry name" value="Ribosomal_uS5_bac-type"/>
</dbReference>
<dbReference type="InterPro" id="IPR005324">
    <property type="entry name" value="Ribosomal_uS5_C"/>
</dbReference>
<dbReference type="InterPro" id="IPR013810">
    <property type="entry name" value="Ribosomal_uS5_N"/>
</dbReference>
<dbReference type="InterPro" id="IPR018192">
    <property type="entry name" value="Ribosomal_uS5_N_CS"/>
</dbReference>
<dbReference type="InterPro" id="IPR014721">
    <property type="entry name" value="Ribsml_uS5_D2-typ_fold_subgr"/>
</dbReference>
<dbReference type="NCBIfam" id="TIGR01021">
    <property type="entry name" value="rpsE_bact"/>
    <property type="match status" value="1"/>
</dbReference>
<dbReference type="PANTHER" id="PTHR48277">
    <property type="entry name" value="MITOCHONDRIAL RIBOSOMAL PROTEIN S5"/>
    <property type="match status" value="1"/>
</dbReference>
<dbReference type="PANTHER" id="PTHR48277:SF1">
    <property type="entry name" value="MITOCHONDRIAL RIBOSOMAL PROTEIN S5"/>
    <property type="match status" value="1"/>
</dbReference>
<dbReference type="Pfam" id="PF00333">
    <property type="entry name" value="Ribosomal_S5"/>
    <property type="match status" value="1"/>
</dbReference>
<dbReference type="Pfam" id="PF03719">
    <property type="entry name" value="Ribosomal_S5_C"/>
    <property type="match status" value="1"/>
</dbReference>
<dbReference type="SUPFAM" id="SSF54768">
    <property type="entry name" value="dsRNA-binding domain-like"/>
    <property type="match status" value="1"/>
</dbReference>
<dbReference type="SUPFAM" id="SSF54211">
    <property type="entry name" value="Ribosomal protein S5 domain 2-like"/>
    <property type="match status" value="1"/>
</dbReference>
<dbReference type="PROSITE" id="PS00585">
    <property type="entry name" value="RIBOSOMAL_S5"/>
    <property type="match status" value="1"/>
</dbReference>
<dbReference type="PROSITE" id="PS50881">
    <property type="entry name" value="S5_DSRBD"/>
    <property type="match status" value="1"/>
</dbReference>
<sequence length="172" mass="18150">MAKMQAKVQADERDDGLREKMISVNRVTKVVKGGRILGFAALTVVGDGDGRVGMGKGKAKEVPVAVQKAMEQARRNMFKVPLKNGTLQHEVHGKHGASTVLLAPAKDGTGVIAGGPMRAVFDVMGVQNVVAKSHGSTNPYNLVRATLDGLRKQSTPADIAAKRGKSVEEILG</sequence>
<evidence type="ECO:0000255" key="1">
    <source>
        <dbReference type="HAMAP-Rule" id="MF_01307"/>
    </source>
</evidence>
<evidence type="ECO:0000305" key="2"/>
<organism>
    <name type="scientific">Burkholderia mallei (strain SAVP1)</name>
    <dbReference type="NCBI Taxonomy" id="320388"/>
    <lineage>
        <taxon>Bacteria</taxon>
        <taxon>Pseudomonadati</taxon>
        <taxon>Pseudomonadota</taxon>
        <taxon>Betaproteobacteria</taxon>
        <taxon>Burkholderiales</taxon>
        <taxon>Burkholderiaceae</taxon>
        <taxon>Burkholderia</taxon>
        <taxon>pseudomallei group</taxon>
    </lineage>
</organism>
<name>RS5_BURMS</name>